<gene>
    <name evidence="1" type="primary">plsY</name>
    <name type="ordered locus">MYPU_2950</name>
</gene>
<name>PLSY_MYCPU</name>
<proteinExistence type="inferred from homology"/>
<protein>
    <recommendedName>
        <fullName evidence="1">Glycerol-3-phosphate acyltransferase</fullName>
    </recommendedName>
    <alternativeName>
        <fullName evidence="1">Acyl-PO4 G3P acyltransferase</fullName>
    </alternativeName>
    <alternativeName>
        <fullName evidence="1">Acyl-phosphate--glycerol-3-phosphate acyltransferase</fullName>
    </alternativeName>
    <alternativeName>
        <fullName evidence="1">G3P acyltransferase</fullName>
        <shortName evidence="1">GPAT</shortName>
        <ecNumber evidence="1">2.3.1.275</ecNumber>
    </alternativeName>
    <alternativeName>
        <fullName evidence="1">Lysophosphatidic acid synthase</fullName>
        <shortName evidence="1">LPA synthase</shortName>
    </alternativeName>
</protein>
<feature type="chain" id="PRO_0000188407" description="Glycerol-3-phosphate acyltransferase">
    <location>
        <begin position="1"/>
        <end position="224"/>
    </location>
</feature>
<feature type="transmembrane region" description="Helical" evidence="1">
    <location>
        <begin position="4"/>
        <end position="24"/>
    </location>
</feature>
<feature type="transmembrane region" description="Helical" evidence="1">
    <location>
        <begin position="60"/>
        <end position="80"/>
    </location>
</feature>
<feature type="transmembrane region" description="Helical" evidence="1">
    <location>
        <begin position="88"/>
        <end position="108"/>
    </location>
</feature>
<feature type="transmembrane region" description="Helical" evidence="1">
    <location>
        <begin position="124"/>
        <end position="144"/>
    </location>
</feature>
<feature type="transmembrane region" description="Helical" evidence="1">
    <location>
        <begin position="149"/>
        <end position="169"/>
    </location>
</feature>
<feature type="transmembrane region" description="Helical" evidence="1">
    <location>
        <begin position="182"/>
        <end position="202"/>
    </location>
</feature>
<reference key="1">
    <citation type="journal article" date="2001" name="Nucleic Acids Res.">
        <title>The complete genome sequence of the murine respiratory pathogen Mycoplasma pulmonis.</title>
        <authorList>
            <person name="Chambaud I."/>
            <person name="Heilig R."/>
            <person name="Ferris S."/>
            <person name="Barbe V."/>
            <person name="Samson D."/>
            <person name="Galisson F."/>
            <person name="Moszer I."/>
            <person name="Dybvig K."/>
            <person name="Wroblewski H."/>
            <person name="Viari A."/>
            <person name="Rocha E.P.C."/>
            <person name="Blanchard A."/>
        </authorList>
    </citation>
    <scope>NUCLEOTIDE SEQUENCE [LARGE SCALE GENOMIC DNA]</scope>
    <source>
        <strain>UAB CTIP</strain>
    </source>
</reference>
<dbReference type="EC" id="2.3.1.275" evidence="1"/>
<dbReference type="EMBL" id="AL445564">
    <property type="protein sequence ID" value="CAC13468.1"/>
    <property type="molecule type" value="Genomic_DNA"/>
</dbReference>
<dbReference type="PIR" id="G90548">
    <property type="entry name" value="G90548"/>
</dbReference>
<dbReference type="RefSeq" id="WP_010925099.1">
    <property type="nucleotide sequence ID" value="NC_002771.1"/>
</dbReference>
<dbReference type="SMR" id="Q98QR6"/>
<dbReference type="STRING" id="272635.gene:17576886"/>
<dbReference type="KEGG" id="mpu:MYPU_2950"/>
<dbReference type="eggNOG" id="COG0344">
    <property type="taxonomic scope" value="Bacteria"/>
</dbReference>
<dbReference type="HOGENOM" id="CLU_081254_3_0_14"/>
<dbReference type="BioCyc" id="MPUL272635:G1GT6-296-MONOMER"/>
<dbReference type="UniPathway" id="UPA00085"/>
<dbReference type="Proteomes" id="UP000000528">
    <property type="component" value="Chromosome"/>
</dbReference>
<dbReference type="GO" id="GO:0005886">
    <property type="term" value="C:plasma membrane"/>
    <property type="evidence" value="ECO:0007669"/>
    <property type="project" value="UniProtKB-SubCell"/>
</dbReference>
<dbReference type="GO" id="GO:0043772">
    <property type="term" value="F:acyl-phosphate glycerol-3-phosphate acyltransferase activity"/>
    <property type="evidence" value="ECO:0007669"/>
    <property type="project" value="UniProtKB-UniRule"/>
</dbReference>
<dbReference type="GO" id="GO:0008654">
    <property type="term" value="P:phospholipid biosynthetic process"/>
    <property type="evidence" value="ECO:0007669"/>
    <property type="project" value="UniProtKB-UniRule"/>
</dbReference>
<dbReference type="HAMAP" id="MF_01043">
    <property type="entry name" value="PlsY"/>
    <property type="match status" value="1"/>
</dbReference>
<dbReference type="InterPro" id="IPR003811">
    <property type="entry name" value="G3P_acylTferase_PlsY"/>
</dbReference>
<dbReference type="NCBIfam" id="TIGR00023">
    <property type="entry name" value="glycerol-3-phosphate 1-O-acyltransferase PlsY"/>
    <property type="match status" value="1"/>
</dbReference>
<dbReference type="PANTHER" id="PTHR30309:SF0">
    <property type="entry name" value="GLYCEROL-3-PHOSPHATE ACYLTRANSFERASE-RELATED"/>
    <property type="match status" value="1"/>
</dbReference>
<dbReference type="PANTHER" id="PTHR30309">
    <property type="entry name" value="INNER MEMBRANE PROTEIN YGIH"/>
    <property type="match status" value="1"/>
</dbReference>
<dbReference type="Pfam" id="PF02660">
    <property type="entry name" value="G3P_acyltransf"/>
    <property type="match status" value="1"/>
</dbReference>
<dbReference type="SMART" id="SM01207">
    <property type="entry name" value="G3P_acyltransf"/>
    <property type="match status" value="1"/>
</dbReference>
<keyword id="KW-1003">Cell membrane</keyword>
<keyword id="KW-0444">Lipid biosynthesis</keyword>
<keyword id="KW-0443">Lipid metabolism</keyword>
<keyword id="KW-0472">Membrane</keyword>
<keyword id="KW-0594">Phospholipid biosynthesis</keyword>
<keyword id="KW-1208">Phospholipid metabolism</keyword>
<keyword id="KW-1185">Reference proteome</keyword>
<keyword id="KW-0808">Transferase</keyword>
<keyword id="KW-0812">Transmembrane</keyword>
<keyword id="KW-1133">Transmembrane helix</keyword>
<accession>Q98QR6</accession>
<evidence type="ECO:0000255" key="1">
    <source>
        <dbReference type="HAMAP-Rule" id="MF_01043"/>
    </source>
</evidence>
<sequence length="224" mass="25376">MPDFVIVLINLAFCLGAYLFGSINFSIIYSKFKKNDVRKLGSGNAGSTNVLRNFGVKIALVIFALDILKTYLASLLVYFVNLYAFKDSVVVFHAVAYCVVIGHIFPIWHKFKGGKGAASTLGYIISVNIIIAVIGAIVYLLIIIYWKRIVSFTTLITIPSLLPLMFIPWMSQLPLGFIAYQWPWWISPLVYVLIILLVIWSHHENISRMIKGQEKVIKWNKTSK</sequence>
<organism>
    <name type="scientific">Mycoplasmopsis pulmonis (strain UAB CTIP)</name>
    <name type="common">Mycoplasma pulmonis</name>
    <dbReference type="NCBI Taxonomy" id="272635"/>
    <lineage>
        <taxon>Bacteria</taxon>
        <taxon>Bacillati</taxon>
        <taxon>Mycoplasmatota</taxon>
        <taxon>Mycoplasmoidales</taxon>
        <taxon>Metamycoplasmataceae</taxon>
        <taxon>Mycoplasmopsis</taxon>
    </lineage>
</organism>
<comment type="function">
    <text evidence="1">Catalyzes the transfer of an acyl group from acyl-phosphate (acyl-PO(4)) to glycerol-3-phosphate (G3P) to form lysophosphatidic acid (LPA). This enzyme utilizes acyl-phosphate as fatty acyl donor, but not acyl-CoA or acyl-ACP.</text>
</comment>
<comment type="catalytic activity">
    <reaction evidence="1">
        <text>an acyl phosphate + sn-glycerol 3-phosphate = a 1-acyl-sn-glycero-3-phosphate + phosphate</text>
        <dbReference type="Rhea" id="RHEA:34075"/>
        <dbReference type="ChEBI" id="CHEBI:43474"/>
        <dbReference type="ChEBI" id="CHEBI:57597"/>
        <dbReference type="ChEBI" id="CHEBI:57970"/>
        <dbReference type="ChEBI" id="CHEBI:59918"/>
        <dbReference type="EC" id="2.3.1.275"/>
    </reaction>
</comment>
<comment type="pathway">
    <text evidence="1">Lipid metabolism; phospholipid metabolism.</text>
</comment>
<comment type="subunit">
    <text evidence="1">Probably interacts with PlsX.</text>
</comment>
<comment type="subcellular location">
    <subcellularLocation>
        <location evidence="1">Cell membrane</location>
        <topology evidence="1">Multi-pass membrane protein</topology>
    </subcellularLocation>
</comment>
<comment type="similarity">
    <text evidence="1">Belongs to the PlsY family.</text>
</comment>